<sequence length="319" mass="34203">MRTIAVLTSGGDAPGMNAAIRAVVRTGLEKGLKVMGIQRGYNGLINGEIFEMDTHSVSDIIQRGGTILRTARCEEFRTEQGREKAAKILKAFGIDGLVVIGGDGSFHGAQLLSKLGINTVGLPGTIDNDLAYTDYTIGFDTSINTVLDAINKLRDTSTSHERVSVVEVMGRNCGDIALYTGVAGGAESIIIPEKEYNADKLCKQILQGKLKGKMHNLVLLAEGVGGANELAKYIEEVTGIETRSTILGHIQRGGSPTCMDRILASRMAYKAVELLISGKSSRVVGIKNGKIIDMDIDEALAVERSFDQELYDIATILSK</sequence>
<dbReference type="EC" id="2.7.1.11" evidence="1"/>
<dbReference type="EMBL" id="CP000728">
    <property type="protein sequence ID" value="ABS41710.1"/>
    <property type="molecule type" value="Genomic_DNA"/>
</dbReference>
<dbReference type="RefSeq" id="WP_003357588.1">
    <property type="nucleotide sequence ID" value="NC_009699.1"/>
</dbReference>
<dbReference type="SMR" id="A7GIW9"/>
<dbReference type="GeneID" id="5184682"/>
<dbReference type="KEGG" id="cbf:CLI_3557"/>
<dbReference type="HOGENOM" id="CLU_020655_0_1_9"/>
<dbReference type="UniPathway" id="UPA00109">
    <property type="reaction ID" value="UER00182"/>
</dbReference>
<dbReference type="Proteomes" id="UP000002410">
    <property type="component" value="Chromosome"/>
</dbReference>
<dbReference type="GO" id="GO:0005945">
    <property type="term" value="C:6-phosphofructokinase complex"/>
    <property type="evidence" value="ECO:0007669"/>
    <property type="project" value="TreeGrafter"/>
</dbReference>
<dbReference type="GO" id="GO:0003872">
    <property type="term" value="F:6-phosphofructokinase activity"/>
    <property type="evidence" value="ECO:0007669"/>
    <property type="project" value="UniProtKB-UniRule"/>
</dbReference>
<dbReference type="GO" id="GO:0016208">
    <property type="term" value="F:AMP binding"/>
    <property type="evidence" value="ECO:0007669"/>
    <property type="project" value="TreeGrafter"/>
</dbReference>
<dbReference type="GO" id="GO:0005524">
    <property type="term" value="F:ATP binding"/>
    <property type="evidence" value="ECO:0007669"/>
    <property type="project" value="UniProtKB-KW"/>
</dbReference>
<dbReference type="GO" id="GO:0070095">
    <property type="term" value="F:fructose-6-phosphate binding"/>
    <property type="evidence" value="ECO:0007669"/>
    <property type="project" value="TreeGrafter"/>
</dbReference>
<dbReference type="GO" id="GO:0042802">
    <property type="term" value="F:identical protein binding"/>
    <property type="evidence" value="ECO:0007669"/>
    <property type="project" value="TreeGrafter"/>
</dbReference>
<dbReference type="GO" id="GO:0046872">
    <property type="term" value="F:metal ion binding"/>
    <property type="evidence" value="ECO:0007669"/>
    <property type="project" value="UniProtKB-KW"/>
</dbReference>
<dbReference type="GO" id="GO:0048029">
    <property type="term" value="F:monosaccharide binding"/>
    <property type="evidence" value="ECO:0007669"/>
    <property type="project" value="TreeGrafter"/>
</dbReference>
<dbReference type="GO" id="GO:0061621">
    <property type="term" value="P:canonical glycolysis"/>
    <property type="evidence" value="ECO:0007669"/>
    <property type="project" value="TreeGrafter"/>
</dbReference>
<dbReference type="GO" id="GO:0030388">
    <property type="term" value="P:fructose 1,6-bisphosphate metabolic process"/>
    <property type="evidence" value="ECO:0007669"/>
    <property type="project" value="TreeGrafter"/>
</dbReference>
<dbReference type="GO" id="GO:0006002">
    <property type="term" value="P:fructose 6-phosphate metabolic process"/>
    <property type="evidence" value="ECO:0007669"/>
    <property type="project" value="InterPro"/>
</dbReference>
<dbReference type="FunFam" id="3.40.50.450:FF:000001">
    <property type="entry name" value="ATP-dependent 6-phosphofructokinase"/>
    <property type="match status" value="1"/>
</dbReference>
<dbReference type="FunFam" id="3.40.50.460:FF:000002">
    <property type="entry name" value="ATP-dependent 6-phosphofructokinase"/>
    <property type="match status" value="1"/>
</dbReference>
<dbReference type="Gene3D" id="3.40.50.450">
    <property type="match status" value="1"/>
</dbReference>
<dbReference type="Gene3D" id="3.40.50.460">
    <property type="entry name" value="Phosphofructokinase domain"/>
    <property type="match status" value="1"/>
</dbReference>
<dbReference type="HAMAP" id="MF_00339">
    <property type="entry name" value="Phosphofructokinase_I_B1"/>
    <property type="match status" value="1"/>
</dbReference>
<dbReference type="InterPro" id="IPR022953">
    <property type="entry name" value="ATP_PFK"/>
</dbReference>
<dbReference type="InterPro" id="IPR012003">
    <property type="entry name" value="ATP_PFK_prok-type"/>
</dbReference>
<dbReference type="InterPro" id="IPR012828">
    <property type="entry name" value="PFKA_ATP_prok"/>
</dbReference>
<dbReference type="InterPro" id="IPR015912">
    <property type="entry name" value="Phosphofructokinase_CS"/>
</dbReference>
<dbReference type="InterPro" id="IPR000023">
    <property type="entry name" value="Phosphofructokinase_dom"/>
</dbReference>
<dbReference type="InterPro" id="IPR035966">
    <property type="entry name" value="PKF_sf"/>
</dbReference>
<dbReference type="NCBIfam" id="TIGR02482">
    <property type="entry name" value="PFKA_ATP"/>
    <property type="match status" value="1"/>
</dbReference>
<dbReference type="NCBIfam" id="NF002872">
    <property type="entry name" value="PRK03202.1"/>
    <property type="match status" value="1"/>
</dbReference>
<dbReference type="PANTHER" id="PTHR13697:SF4">
    <property type="entry name" value="ATP-DEPENDENT 6-PHOSPHOFRUCTOKINASE"/>
    <property type="match status" value="1"/>
</dbReference>
<dbReference type="PANTHER" id="PTHR13697">
    <property type="entry name" value="PHOSPHOFRUCTOKINASE"/>
    <property type="match status" value="1"/>
</dbReference>
<dbReference type="Pfam" id="PF00365">
    <property type="entry name" value="PFK"/>
    <property type="match status" value="1"/>
</dbReference>
<dbReference type="PIRSF" id="PIRSF000532">
    <property type="entry name" value="ATP_PFK_prok"/>
    <property type="match status" value="1"/>
</dbReference>
<dbReference type="PRINTS" id="PR00476">
    <property type="entry name" value="PHFRCTKINASE"/>
</dbReference>
<dbReference type="SUPFAM" id="SSF53784">
    <property type="entry name" value="Phosphofructokinase"/>
    <property type="match status" value="1"/>
</dbReference>
<dbReference type="PROSITE" id="PS00433">
    <property type="entry name" value="PHOSPHOFRUCTOKINASE"/>
    <property type="match status" value="1"/>
</dbReference>
<comment type="function">
    <text evidence="1">Catalyzes the phosphorylation of D-fructose 6-phosphate to fructose 1,6-bisphosphate by ATP, the first committing step of glycolysis.</text>
</comment>
<comment type="catalytic activity">
    <reaction evidence="1">
        <text>beta-D-fructose 6-phosphate + ATP = beta-D-fructose 1,6-bisphosphate + ADP + H(+)</text>
        <dbReference type="Rhea" id="RHEA:16109"/>
        <dbReference type="ChEBI" id="CHEBI:15378"/>
        <dbReference type="ChEBI" id="CHEBI:30616"/>
        <dbReference type="ChEBI" id="CHEBI:32966"/>
        <dbReference type="ChEBI" id="CHEBI:57634"/>
        <dbReference type="ChEBI" id="CHEBI:456216"/>
        <dbReference type="EC" id="2.7.1.11"/>
    </reaction>
</comment>
<comment type="cofactor">
    <cofactor evidence="1">
        <name>Mg(2+)</name>
        <dbReference type="ChEBI" id="CHEBI:18420"/>
    </cofactor>
</comment>
<comment type="activity regulation">
    <text evidence="1">Allosterically activated by ADP and other diphosphonucleosides, and allosterically inhibited by phosphoenolpyruvate.</text>
</comment>
<comment type="pathway">
    <text evidence="1">Carbohydrate degradation; glycolysis; D-glyceraldehyde 3-phosphate and glycerone phosphate from D-glucose: step 3/4.</text>
</comment>
<comment type="subunit">
    <text evidence="1">Homotetramer.</text>
</comment>
<comment type="subcellular location">
    <subcellularLocation>
        <location evidence="1">Cytoplasm</location>
    </subcellularLocation>
</comment>
<comment type="similarity">
    <text evidence="1">Belongs to the phosphofructokinase type A (PFKA) family. ATP-dependent PFK group I subfamily. Prokaryotic clade 'B1' sub-subfamily.</text>
</comment>
<proteinExistence type="inferred from homology"/>
<keyword id="KW-0021">Allosteric enzyme</keyword>
<keyword id="KW-0067">ATP-binding</keyword>
<keyword id="KW-0963">Cytoplasm</keyword>
<keyword id="KW-0324">Glycolysis</keyword>
<keyword id="KW-0418">Kinase</keyword>
<keyword id="KW-0460">Magnesium</keyword>
<keyword id="KW-0479">Metal-binding</keyword>
<keyword id="KW-0547">Nucleotide-binding</keyword>
<keyword id="KW-0808">Transferase</keyword>
<evidence type="ECO:0000255" key="1">
    <source>
        <dbReference type="HAMAP-Rule" id="MF_00339"/>
    </source>
</evidence>
<name>PFKA_CLOBL</name>
<organism>
    <name type="scientific">Clostridium botulinum (strain Langeland / NCTC 10281 / Type F)</name>
    <dbReference type="NCBI Taxonomy" id="441772"/>
    <lineage>
        <taxon>Bacteria</taxon>
        <taxon>Bacillati</taxon>
        <taxon>Bacillota</taxon>
        <taxon>Clostridia</taxon>
        <taxon>Eubacteriales</taxon>
        <taxon>Clostridiaceae</taxon>
        <taxon>Clostridium</taxon>
    </lineage>
</organism>
<feature type="chain" id="PRO_1000059753" description="ATP-dependent 6-phosphofructokinase">
    <location>
        <begin position="1"/>
        <end position="319"/>
    </location>
</feature>
<feature type="active site" description="Proton acceptor" evidence="1">
    <location>
        <position position="127"/>
    </location>
</feature>
<feature type="binding site" evidence="1">
    <location>
        <position position="11"/>
    </location>
    <ligand>
        <name>ATP</name>
        <dbReference type="ChEBI" id="CHEBI:30616"/>
    </ligand>
</feature>
<feature type="binding site" evidence="1">
    <location>
        <begin position="21"/>
        <end position="25"/>
    </location>
    <ligand>
        <name>ADP</name>
        <dbReference type="ChEBI" id="CHEBI:456216"/>
        <note>allosteric activator; ligand shared between dimeric partners</note>
    </ligand>
</feature>
<feature type="binding site" evidence="1">
    <location>
        <begin position="72"/>
        <end position="73"/>
    </location>
    <ligand>
        <name>ATP</name>
        <dbReference type="ChEBI" id="CHEBI:30616"/>
    </ligand>
</feature>
<feature type="binding site" evidence="1">
    <location>
        <begin position="102"/>
        <end position="105"/>
    </location>
    <ligand>
        <name>ATP</name>
        <dbReference type="ChEBI" id="CHEBI:30616"/>
    </ligand>
</feature>
<feature type="binding site" evidence="1">
    <location>
        <position position="103"/>
    </location>
    <ligand>
        <name>Mg(2+)</name>
        <dbReference type="ChEBI" id="CHEBI:18420"/>
        <note>catalytic</note>
    </ligand>
</feature>
<feature type="binding site" description="in other chain" evidence="1">
    <location>
        <begin position="125"/>
        <end position="127"/>
    </location>
    <ligand>
        <name>substrate</name>
        <note>ligand shared between dimeric partners</note>
    </ligand>
</feature>
<feature type="binding site" description="in other chain" evidence="1">
    <location>
        <position position="154"/>
    </location>
    <ligand>
        <name>ADP</name>
        <dbReference type="ChEBI" id="CHEBI:456216"/>
        <note>allosteric activator; ligand shared between dimeric partners</note>
    </ligand>
</feature>
<feature type="binding site" evidence="1">
    <location>
        <position position="162"/>
    </location>
    <ligand>
        <name>substrate</name>
        <note>ligand shared between dimeric partners</note>
    </ligand>
</feature>
<feature type="binding site" description="in other chain" evidence="1">
    <location>
        <begin position="169"/>
        <end position="171"/>
    </location>
    <ligand>
        <name>substrate</name>
        <note>ligand shared between dimeric partners</note>
    </ligand>
</feature>
<feature type="binding site" description="in other chain" evidence="1">
    <location>
        <begin position="185"/>
        <end position="187"/>
    </location>
    <ligand>
        <name>ADP</name>
        <dbReference type="ChEBI" id="CHEBI:456216"/>
        <note>allosteric activator; ligand shared between dimeric partners</note>
    </ligand>
</feature>
<feature type="binding site" description="in other chain" evidence="1">
    <location>
        <position position="211"/>
    </location>
    <ligand>
        <name>ADP</name>
        <dbReference type="ChEBI" id="CHEBI:456216"/>
        <note>allosteric activator; ligand shared between dimeric partners</note>
    </ligand>
</feature>
<feature type="binding site" description="in other chain" evidence="1">
    <location>
        <begin position="213"/>
        <end position="215"/>
    </location>
    <ligand>
        <name>ADP</name>
        <dbReference type="ChEBI" id="CHEBI:456216"/>
        <note>allosteric activator; ligand shared between dimeric partners</note>
    </ligand>
</feature>
<feature type="binding site" description="in other chain" evidence="1">
    <location>
        <position position="222"/>
    </location>
    <ligand>
        <name>substrate</name>
        <note>ligand shared between dimeric partners</note>
    </ligand>
</feature>
<feature type="binding site" evidence="1">
    <location>
        <position position="243"/>
    </location>
    <ligand>
        <name>substrate</name>
        <note>ligand shared between dimeric partners</note>
    </ligand>
</feature>
<feature type="binding site" description="in other chain" evidence="1">
    <location>
        <begin position="249"/>
        <end position="252"/>
    </location>
    <ligand>
        <name>substrate</name>
        <note>ligand shared between dimeric partners</note>
    </ligand>
</feature>
<gene>
    <name evidence="1" type="primary">pfkA</name>
    <name type="ordered locus">CLI_3557</name>
</gene>
<protein>
    <recommendedName>
        <fullName evidence="1">ATP-dependent 6-phosphofructokinase</fullName>
        <shortName evidence="1">ATP-PFK</shortName>
        <shortName evidence="1">Phosphofructokinase</shortName>
        <ecNumber evidence="1">2.7.1.11</ecNumber>
    </recommendedName>
    <alternativeName>
        <fullName evidence="1">Phosphohexokinase</fullName>
    </alternativeName>
</protein>
<accession>A7GIW9</accession>
<reference key="1">
    <citation type="submission" date="2007-06" db="EMBL/GenBank/DDBJ databases">
        <authorList>
            <person name="Brinkac L.M."/>
            <person name="Daugherty S."/>
            <person name="Dodson R.J."/>
            <person name="Madupu R."/>
            <person name="Brown J.L."/>
            <person name="Bruce D."/>
            <person name="Detter C."/>
            <person name="Munk C."/>
            <person name="Smith L.A."/>
            <person name="Smith T.J."/>
            <person name="White O."/>
            <person name="Brettin T.S."/>
        </authorList>
    </citation>
    <scope>NUCLEOTIDE SEQUENCE [LARGE SCALE GENOMIC DNA]</scope>
    <source>
        <strain>Langeland / NCTC 10281 / Type F</strain>
    </source>
</reference>